<proteinExistence type="inferred from homology"/>
<accession>Q73F68</accession>
<organism>
    <name type="scientific">Bacillus cereus (strain ATCC 10987 / NRS 248)</name>
    <dbReference type="NCBI Taxonomy" id="222523"/>
    <lineage>
        <taxon>Bacteria</taxon>
        <taxon>Bacillati</taxon>
        <taxon>Bacillota</taxon>
        <taxon>Bacilli</taxon>
        <taxon>Bacillales</taxon>
        <taxon>Bacillaceae</taxon>
        <taxon>Bacillus</taxon>
        <taxon>Bacillus cereus group</taxon>
    </lineage>
</organism>
<name>RL17_BACC1</name>
<protein>
    <recommendedName>
        <fullName evidence="1">Large ribosomal subunit protein bL17</fullName>
    </recommendedName>
    <alternativeName>
        <fullName evidence="2">50S ribosomal protein L17</fullName>
    </alternativeName>
</protein>
<keyword id="KW-0687">Ribonucleoprotein</keyword>
<keyword id="KW-0689">Ribosomal protein</keyword>
<dbReference type="EMBL" id="AE017194">
    <property type="protein sequence ID" value="AAS39074.1"/>
    <property type="molecule type" value="Genomic_DNA"/>
</dbReference>
<dbReference type="SMR" id="Q73F68"/>
<dbReference type="KEGG" id="bca:BCE_0138"/>
<dbReference type="HOGENOM" id="CLU_074407_2_2_9"/>
<dbReference type="Proteomes" id="UP000002527">
    <property type="component" value="Chromosome"/>
</dbReference>
<dbReference type="GO" id="GO:0022625">
    <property type="term" value="C:cytosolic large ribosomal subunit"/>
    <property type="evidence" value="ECO:0007669"/>
    <property type="project" value="TreeGrafter"/>
</dbReference>
<dbReference type="GO" id="GO:0003735">
    <property type="term" value="F:structural constituent of ribosome"/>
    <property type="evidence" value="ECO:0007669"/>
    <property type="project" value="InterPro"/>
</dbReference>
<dbReference type="GO" id="GO:0006412">
    <property type="term" value="P:translation"/>
    <property type="evidence" value="ECO:0007669"/>
    <property type="project" value="UniProtKB-UniRule"/>
</dbReference>
<dbReference type="FunFam" id="3.90.1030.10:FF:000002">
    <property type="entry name" value="50S ribosomal protein L17"/>
    <property type="match status" value="1"/>
</dbReference>
<dbReference type="Gene3D" id="3.90.1030.10">
    <property type="entry name" value="Ribosomal protein L17"/>
    <property type="match status" value="1"/>
</dbReference>
<dbReference type="HAMAP" id="MF_01368">
    <property type="entry name" value="Ribosomal_bL17"/>
    <property type="match status" value="1"/>
</dbReference>
<dbReference type="InterPro" id="IPR000456">
    <property type="entry name" value="Ribosomal_bL17"/>
</dbReference>
<dbReference type="InterPro" id="IPR047859">
    <property type="entry name" value="Ribosomal_bL17_CS"/>
</dbReference>
<dbReference type="InterPro" id="IPR036373">
    <property type="entry name" value="Ribosomal_bL17_sf"/>
</dbReference>
<dbReference type="NCBIfam" id="TIGR00059">
    <property type="entry name" value="L17"/>
    <property type="match status" value="1"/>
</dbReference>
<dbReference type="PANTHER" id="PTHR14413:SF16">
    <property type="entry name" value="LARGE RIBOSOMAL SUBUNIT PROTEIN BL17M"/>
    <property type="match status" value="1"/>
</dbReference>
<dbReference type="PANTHER" id="PTHR14413">
    <property type="entry name" value="RIBOSOMAL PROTEIN L17"/>
    <property type="match status" value="1"/>
</dbReference>
<dbReference type="Pfam" id="PF01196">
    <property type="entry name" value="Ribosomal_L17"/>
    <property type="match status" value="1"/>
</dbReference>
<dbReference type="SUPFAM" id="SSF64263">
    <property type="entry name" value="Prokaryotic ribosomal protein L17"/>
    <property type="match status" value="1"/>
</dbReference>
<dbReference type="PROSITE" id="PS01167">
    <property type="entry name" value="RIBOSOMAL_L17"/>
    <property type="match status" value="1"/>
</dbReference>
<reference key="1">
    <citation type="journal article" date="2004" name="Nucleic Acids Res.">
        <title>The genome sequence of Bacillus cereus ATCC 10987 reveals metabolic adaptations and a large plasmid related to Bacillus anthracis pXO1.</title>
        <authorList>
            <person name="Rasko D.A."/>
            <person name="Ravel J."/>
            <person name="Oekstad O.A."/>
            <person name="Helgason E."/>
            <person name="Cer R.Z."/>
            <person name="Jiang L."/>
            <person name="Shores K.A."/>
            <person name="Fouts D.E."/>
            <person name="Tourasse N.J."/>
            <person name="Angiuoli S.V."/>
            <person name="Kolonay J.F."/>
            <person name="Nelson W.C."/>
            <person name="Kolstoe A.-B."/>
            <person name="Fraser C.M."/>
            <person name="Read T.D."/>
        </authorList>
    </citation>
    <scope>NUCLEOTIDE SEQUENCE [LARGE SCALE GENOMIC DNA]</scope>
    <source>
        <strain>ATCC 10987 / NRS 248</strain>
    </source>
</reference>
<feature type="chain" id="PRO_0000267822" description="Large ribosomal subunit protein bL17">
    <location>
        <begin position="1"/>
        <end position="120"/>
    </location>
</feature>
<evidence type="ECO:0000255" key="1">
    <source>
        <dbReference type="HAMAP-Rule" id="MF_01368"/>
    </source>
</evidence>
<evidence type="ECO:0000305" key="2"/>
<comment type="subunit">
    <text evidence="1">Part of the 50S ribosomal subunit. Contacts protein L32.</text>
</comment>
<comment type="similarity">
    <text evidence="1">Belongs to the bacterial ribosomal protein bL17 family.</text>
</comment>
<gene>
    <name evidence="1" type="primary">rplQ</name>
    <name type="ordered locus">BCE_0138</name>
</gene>
<sequence>MAYRKLGRTSAQRKAMLRDLATDLIINERIQTTETRAKELRSVVEKMITLGKRGDLHARRQAAAFIRNEVANAETGQDALQKLFADVAPRYAERQGGYTRIAKIGPRRGDAAPMVIIELV</sequence>